<comment type="function">
    <text evidence="1">The RuvA-RuvB-RuvC complex processes Holliday junction (HJ) DNA during genetic recombination and DNA repair. Endonuclease that resolves HJ intermediates. Cleaves cruciform DNA by making single-stranded nicks across the HJ at symmetrical positions within the homologous arms, yielding a 5'-phosphate and a 3'-hydroxyl group; requires a central core of homology in the junction. The consensus cleavage sequence is 5'-(A/T)TT(C/G)-3'. Cleavage occurs on the 3'-side of the TT dinucleotide at the point of strand exchange. HJ branch migration catalyzed by RuvA-RuvB allows RuvC to scan DNA until it finds its consensus sequence, where it cleaves and resolves the cruciform DNA.</text>
</comment>
<comment type="catalytic activity">
    <reaction evidence="1">
        <text>Endonucleolytic cleavage at a junction such as a reciprocal single-stranded crossover between two homologous DNA duplexes (Holliday junction).</text>
        <dbReference type="EC" id="3.1.21.10"/>
    </reaction>
</comment>
<comment type="cofactor">
    <cofactor evidence="1">
        <name>Mg(2+)</name>
        <dbReference type="ChEBI" id="CHEBI:18420"/>
    </cofactor>
    <text evidence="1">Binds 2 Mg(2+) ion per subunit.</text>
</comment>
<comment type="subunit">
    <text evidence="1">Homodimer which binds Holliday junction (HJ) DNA. The HJ becomes 2-fold symmetrical on binding to RuvC with unstacked arms; it has a different conformation from HJ DNA in complex with RuvA. In the full resolvosome a probable DNA-RuvA(4)-RuvB(12)-RuvC(2) complex forms which resolves the HJ.</text>
</comment>
<comment type="subcellular location">
    <subcellularLocation>
        <location evidence="1">Cytoplasm</location>
    </subcellularLocation>
</comment>
<comment type="similarity">
    <text evidence="1">Belongs to the RuvC family.</text>
</comment>
<reference key="1">
    <citation type="submission" date="2007-08" db="EMBL/GenBank/DDBJ databases">
        <authorList>
            <consortium name="The Vibrio harveyi Genome Sequencing Project"/>
            <person name="Bassler B."/>
            <person name="Clifton S.W."/>
            <person name="Fulton L."/>
            <person name="Delehaunty K."/>
            <person name="Fronick C."/>
            <person name="Harrison M."/>
            <person name="Markivic C."/>
            <person name="Fulton R."/>
            <person name="Tin-Wollam A.-M."/>
            <person name="Shah N."/>
            <person name="Pepin K."/>
            <person name="Nash W."/>
            <person name="Thiruvilangam P."/>
            <person name="Bhonagiri V."/>
            <person name="Waters C."/>
            <person name="Tu K.C."/>
            <person name="Irgon J."/>
            <person name="Wilson R.K."/>
        </authorList>
    </citation>
    <scope>NUCLEOTIDE SEQUENCE [LARGE SCALE GENOMIC DNA]</scope>
    <source>
        <strain>ATCC BAA-1116 / BB120</strain>
    </source>
</reference>
<gene>
    <name evidence="1" type="primary">ruvC</name>
    <name type="ordered locus">VIBHAR_01598</name>
</gene>
<feature type="chain" id="PRO_1000002853" description="Crossover junction endodeoxyribonuclease RuvC">
    <location>
        <begin position="1"/>
        <end position="173"/>
    </location>
</feature>
<feature type="active site" evidence="1">
    <location>
        <position position="8"/>
    </location>
</feature>
<feature type="active site" evidence="1">
    <location>
        <position position="67"/>
    </location>
</feature>
<feature type="active site" evidence="1">
    <location>
        <position position="139"/>
    </location>
</feature>
<feature type="binding site" evidence="1">
    <location>
        <position position="8"/>
    </location>
    <ligand>
        <name>Mg(2+)</name>
        <dbReference type="ChEBI" id="CHEBI:18420"/>
        <label>1</label>
    </ligand>
</feature>
<feature type="binding site" evidence="1">
    <location>
        <position position="67"/>
    </location>
    <ligand>
        <name>Mg(2+)</name>
        <dbReference type="ChEBI" id="CHEBI:18420"/>
        <label>2</label>
    </ligand>
</feature>
<feature type="binding site" evidence="1">
    <location>
        <position position="139"/>
    </location>
    <ligand>
        <name>Mg(2+)</name>
        <dbReference type="ChEBI" id="CHEBI:18420"/>
        <label>1</label>
    </ligand>
</feature>
<protein>
    <recommendedName>
        <fullName evidence="1">Crossover junction endodeoxyribonuclease RuvC</fullName>
        <ecNumber evidence="1">3.1.21.10</ecNumber>
    </recommendedName>
    <alternativeName>
        <fullName evidence="1">Holliday junction nuclease RuvC</fullName>
    </alternativeName>
    <alternativeName>
        <fullName evidence="1">Holliday junction resolvase RuvC</fullName>
    </alternativeName>
</protein>
<evidence type="ECO:0000255" key="1">
    <source>
        <dbReference type="HAMAP-Rule" id="MF_00034"/>
    </source>
</evidence>
<keyword id="KW-0963">Cytoplasm</keyword>
<keyword id="KW-0227">DNA damage</keyword>
<keyword id="KW-0233">DNA recombination</keyword>
<keyword id="KW-0234">DNA repair</keyword>
<keyword id="KW-0238">DNA-binding</keyword>
<keyword id="KW-0255">Endonuclease</keyword>
<keyword id="KW-0378">Hydrolase</keyword>
<keyword id="KW-0460">Magnesium</keyword>
<keyword id="KW-0479">Metal-binding</keyword>
<keyword id="KW-0540">Nuclease</keyword>
<dbReference type="EC" id="3.1.21.10" evidence="1"/>
<dbReference type="EMBL" id="CP000789">
    <property type="protein sequence ID" value="ABU70568.1"/>
    <property type="molecule type" value="Genomic_DNA"/>
</dbReference>
<dbReference type="RefSeq" id="WP_005426231.1">
    <property type="nucleotide sequence ID" value="NC_022269.1"/>
</dbReference>
<dbReference type="SMR" id="A7N1J2"/>
<dbReference type="GeneID" id="83582339"/>
<dbReference type="KEGG" id="vha:VIBHAR_01598"/>
<dbReference type="PATRIC" id="fig|338187.25.peg.1064"/>
<dbReference type="Proteomes" id="UP000008152">
    <property type="component" value="Chromosome I"/>
</dbReference>
<dbReference type="GO" id="GO:0005737">
    <property type="term" value="C:cytoplasm"/>
    <property type="evidence" value="ECO:0007669"/>
    <property type="project" value="UniProtKB-SubCell"/>
</dbReference>
<dbReference type="GO" id="GO:0048476">
    <property type="term" value="C:Holliday junction resolvase complex"/>
    <property type="evidence" value="ECO:0007669"/>
    <property type="project" value="UniProtKB-UniRule"/>
</dbReference>
<dbReference type="GO" id="GO:0008821">
    <property type="term" value="F:crossover junction DNA endonuclease activity"/>
    <property type="evidence" value="ECO:0007669"/>
    <property type="project" value="UniProtKB-UniRule"/>
</dbReference>
<dbReference type="GO" id="GO:0003677">
    <property type="term" value="F:DNA binding"/>
    <property type="evidence" value="ECO:0007669"/>
    <property type="project" value="UniProtKB-KW"/>
</dbReference>
<dbReference type="GO" id="GO:0000287">
    <property type="term" value="F:magnesium ion binding"/>
    <property type="evidence" value="ECO:0007669"/>
    <property type="project" value="UniProtKB-UniRule"/>
</dbReference>
<dbReference type="GO" id="GO:0006310">
    <property type="term" value="P:DNA recombination"/>
    <property type="evidence" value="ECO:0007669"/>
    <property type="project" value="UniProtKB-UniRule"/>
</dbReference>
<dbReference type="GO" id="GO:0006281">
    <property type="term" value="P:DNA repair"/>
    <property type="evidence" value="ECO:0007669"/>
    <property type="project" value="UniProtKB-UniRule"/>
</dbReference>
<dbReference type="CDD" id="cd16962">
    <property type="entry name" value="RuvC"/>
    <property type="match status" value="1"/>
</dbReference>
<dbReference type="FunFam" id="3.30.420.10:FF:000002">
    <property type="entry name" value="Crossover junction endodeoxyribonuclease RuvC"/>
    <property type="match status" value="1"/>
</dbReference>
<dbReference type="Gene3D" id="3.30.420.10">
    <property type="entry name" value="Ribonuclease H-like superfamily/Ribonuclease H"/>
    <property type="match status" value="1"/>
</dbReference>
<dbReference type="HAMAP" id="MF_00034">
    <property type="entry name" value="RuvC"/>
    <property type="match status" value="1"/>
</dbReference>
<dbReference type="InterPro" id="IPR012337">
    <property type="entry name" value="RNaseH-like_sf"/>
</dbReference>
<dbReference type="InterPro" id="IPR036397">
    <property type="entry name" value="RNaseH_sf"/>
</dbReference>
<dbReference type="InterPro" id="IPR020563">
    <property type="entry name" value="X-over_junc_endoDNase_Mg_BS"/>
</dbReference>
<dbReference type="InterPro" id="IPR002176">
    <property type="entry name" value="X-over_junc_endoDNase_RuvC"/>
</dbReference>
<dbReference type="NCBIfam" id="TIGR00228">
    <property type="entry name" value="ruvC"/>
    <property type="match status" value="1"/>
</dbReference>
<dbReference type="PANTHER" id="PTHR30194">
    <property type="entry name" value="CROSSOVER JUNCTION ENDODEOXYRIBONUCLEASE RUVC"/>
    <property type="match status" value="1"/>
</dbReference>
<dbReference type="PANTHER" id="PTHR30194:SF3">
    <property type="entry name" value="CROSSOVER JUNCTION ENDODEOXYRIBONUCLEASE RUVC"/>
    <property type="match status" value="1"/>
</dbReference>
<dbReference type="Pfam" id="PF02075">
    <property type="entry name" value="RuvC"/>
    <property type="match status" value="1"/>
</dbReference>
<dbReference type="PRINTS" id="PR00696">
    <property type="entry name" value="RSOLVASERUVC"/>
</dbReference>
<dbReference type="SUPFAM" id="SSF53098">
    <property type="entry name" value="Ribonuclease H-like"/>
    <property type="match status" value="1"/>
</dbReference>
<dbReference type="PROSITE" id="PS01321">
    <property type="entry name" value="RUVC"/>
    <property type="match status" value="1"/>
</dbReference>
<proteinExistence type="inferred from homology"/>
<accession>A7N1J2</accession>
<organism>
    <name type="scientific">Vibrio campbellii (strain ATCC BAA-1116)</name>
    <dbReference type="NCBI Taxonomy" id="2902295"/>
    <lineage>
        <taxon>Bacteria</taxon>
        <taxon>Pseudomonadati</taxon>
        <taxon>Pseudomonadota</taxon>
        <taxon>Gammaproteobacteria</taxon>
        <taxon>Vibrionales</taxon>
        <taxon>Vibrionaceae</taxon>
        <taxon>Vibrio</taxon>
    </lineage>
</organism>
<sequence length="173" mass="18430">MSIILGIDPGSRITGYGVIRQQGRHLQYLGSGCIRTSEKELPGRLKQIYAGVTEIITQFQPDVFAIEQVFMAKNADSALKLGQARGSAIVAAVNADLPVHEYAARLIKQAVTGTGGADKVQVQHMVQHMLKLPAKPQADAADALGVAICHANTNKTLVALAGKATSARKGRYR</sequence>
<name>RUVC_VIBC1</name>